<sequence>MAAASATSTDFVRFALDEGVLRFGSFKVKSGRTSPYFFNAGLFNSGASVGRLAQFYAQALVDSGIAFDMLFGPAYKGIPLATATAVALAGHPAMQGRDVPFAFNRKEAKDHGEGGTLVGAPLQGRVVIIDDVITAGTSVRESVEIIRAAGAEPAAVLIALDRQERAGPDDALSPHSAVQDVAKTYGMPVVSIASLADILALLQGDAQFAGNREAVLAYRGKYGVV</sequence>
<name>PYRE_BORPD</name>
<reference key="1">
    <citation type="journal article" date="2008" name="BMC Genomics">
        <title>The missing link: Bordetella petrii is endowed with both the metabolic versatility of environmental bacteria and virulence traits of pathogenic Bordetellae.</title>
        <authorList>
            <person name="Gross R."/>
            <person name="Guzman C.A."/>
            <person name="Sebaihia M."/>
            <person name="Martin dos Santos V.A.P."/>
            <person name="Pieper D.H."/>
            <person name="Koebnik R."/>
            <person name="Lechner M."/>
            <person name="Bartels D."/>
            <person name="Buhrmester J."/>
            <person name="Choudhuri J.V."/>
            <person name="Ebensen T."/>
            <person name="Gaigalat L."/>
            <person name="Herrmann S."/>
            <person name="Khachane A.N."/>
            <person name="Larisch C."/>
            <person name="Link S."/>
            <person name="Linke B."/>
            <person name="Meyer F."/>
            <person name="Mormann S."/>
            <person name="Nakunst D."/>
            <person name="Rueckert C."/>
            <person name="Schneiker-Bekel S."/>
            <person name="Schulze K."/>
            <person name="Voerholter F.-J."/>
            <person name="Yevsa T."/>
            <person name="Engle J.T."/>
            <person name="Goldman W.E."/>
            <person name="Puehler A."/>
            <person name="Goebel U.B."/>
            <person name="Goesmann A."/>
            <person name="Bloecker H."/>
            <person name="Kaiser O."/>
            <person name="Martinez-Arias R."/>
        </authorList>
    </citation>
    <scope>NUCLEOTIDE SEQUENCE [LARGE SCALE GENOMIC DNA]</scope>
    <source>
        <strain>ATCC BAA-461 / DSM 12804 / CCUG 43448</strain>
    </source>
</reference>
<proteinExistence type="inferred from homology"/>
<gene>
    <name evidence="1" type="primary">pyrE</name>
    <name type="ordered locus">Bpet0423</name>
</gene>
<dbReference type="EC" id="2.4.2.10" evidence="1"/>
<dbReference type="EMBL" id="AM902716">
    <property type="protein sequence ID" value="CAP40755.1"/>
    <property type="molecule type" value="Genomic_DNA"/>
</dbReference>
<dbReference type="SMR" id="A9I0G7"/>
<dbReference type="STRING" id="94624.Bpet0423"/>
<dbReference type="KEGG" id="bpt:Bpet0423"/>
<dbReference type="eggNOG" id="COG0461">
    <property type="taxonomic scope" value="Bacteria"/>
</dbReference>
<dbReference type="UniPathway" id="UPA00070">
    <property type="reaction ID" value="UER00119"/>
</dbReference>
<dbReference type="Proteomes" id="UP000001225">
    <property type="component" value="Chromosome"/>
</dbReference>
<dbReference type="GO" id="GO:0005737">
    <property type="term" value="C:cytoplasm"/>
    <property type="evidence" value="ECO:0007669"/>
    <property type="project" value="TreeGrafter"/>
</dbReference>
<dbReference type="GO" id="GO:0000287">
    <property type="term" value="F:magnesium ion binding"/>
    <property type="evidence" value="ECO:0007669"/>
    <property type="project" value="UniProtKB-UniRule"/>
</dbReference>
<dbReference type="GO" id="GO:0004588">
    <property type="term" value="F:orotate phosphoribosyltransferase activity"/>
    <property type="evidence" value="ECO:0007669"/>
    <property type="project" value="UniProtKB-UniRule"/>
</dbReference>
<dbReference type="GO" id="GO:0006207">
    <property type="term" value="P:'de novo' pyrimidine nucleobase biosynthetic process"/>
    <property type="evidence" value="ECO:0007669"/>
    <property type="project" value="TreeGrafter"/>
</dbReference>
<dbReference type="GO" id="GO:0044205">
    <property type="term" value="P:'de novo' UMP biosynthetic process"/>
    <property type="evidence" value="ECO:0007669"/>
    <property type="project" value="UniProtKB-UniRule"/>
</dbReference>
<dbReference type="GO" id="GO:0046132">
    <property type="term" value="P:pyrimidine ribonucleoside biosynthetic process"/>
    <property type="evidence" value="ECO:0007669"/>
    <property type="project" value="TreeGrafter"/>
</dbReference>
<dbReference type="CDD" id="cd06223">
    <property type="entry name" value="PRTases_typeI"/>
    <property type="match status" value="1"/>
</dbReference>
<dbReference type="FunFam" id="3.40.50.2020:FF:000008">
    <property type="entry name" value="Orotate phosphoribosyltransferase"/>
    <property type="match status" value="1"/>
</dbReference>
<dbReference type="Gene3D" id="3.40.50.2020">
    <property type="match status" value="1"/>
</dbReference>
<dbReference type="HAMAP" id="MF_01208">
    <property type="entry name" value="PyrE"/>
    <property type="match status" value="1"/>
</dbReference>
<dbReference type="InterPro" id="IPR023031">
    <property type="entry name" value="OPRT"/>
</dbReference>
<dbReference type="InterPro" id="IPR004467">
    <property type="entry name" value="Or_phspho_trans_dom"/>
</dbReference>
<dbReference type="InterPro" id="IPR000836">
    <property type="entry name" value="PRibTrfase_dom"/>
</dbReference>
<dbReference type="InterPro" id="IPR029057">
    <property type="entry name" value="PRTase-like"/>
</dbReference>
<dbReference type="NCBIfam" id="TIGR00336">
    <property type="entry name" value="pyrE"/>
    <property type="match status" value="1"/>
</dbReference>
<dbReference type="PANTHER" id="PTHR46683">
    <property type="entry name" value="OROTATE PHOSPHORIBOSYLTRANSFERASE 1-RELATED"/>
    <property type="match status" value="1"/>
</dbReference>
<dbReference type="PANTHER" id="PTHR46683:SF1">
    <property type="entry name" value="OROTATE PHOSPHORIBOSYLTRANSFERASE 1-RELATED"/>
    <property type="match status" value="1"/>
</dbReference>
<dbReference type="Pfam" id="PF00156">
    <property type="entry name" value="Pribosyltran"/>
    <property type="match status" value="1"/>
</dbReference>
<dbReference type="SUPFAM" id="SSF53271">
    <property type="entry name" value="PRTase-like"/>
    <property type="match status" value="1"/>
</dbReference>
<dbReference type="PROSITE" id="PS00103">
    <property type="entry name" value="PUR_PYR_PR_TRANSFER"/>
    <property type="match status" value="1"/>
</dbReference>
<feature type="chain" id="PRO_1000138765" description="Orotate phosphoribosyltransferase">
    <location>
        <begin position="1"/>
        <end position="225"/>
    </location>
</feature>
<feature type="binding site" description="in other chain" evidence="1">
    <location>
        <position position="29"/>
    </location>
    <ligand>
        <name>5-phospho-alpha-D-ribose 1-diphosphate</name>
        <dbReference type="ChEBI" id="CHEBI:58017"/>
        <note>ligand shared between dimeric partners</note>
    </ligand>
</feature>
<feature type="binding site" evidence="1">
    <location>
        <begin position="37"/>
        <end position="38"/>
    </location>
    <ligand>
        <name>orotate</name>
        <dbReference type="ChEBI" id="CHEBI:30839"/>
    </ligand>
</feature>
<feature type="binding site" description="in other chain" evidence="1">
    <location>
        <begin position="75"/>
        <end position="76"/>
    </location>
    <ligand>
        <name>5-phospho-alpha-D-ribose 1-diphosphate</name>
        <dbReference type="ChEBI" id="CHEBI:58017"/>
        <note>ligand shared between dimeric partners</note>
    </ligand>
</feature>
<feature type="binding site" evidence="1">
    <location>
        <position position="105"/>
    </location>
    <ligand>
        <name>5-phospho-alpha-D-ribose 1-diphosphate</name>
        <dbReference type="ChEBI" id="CHEBI:58017"/>
        <note>ligand shared between dimeric partners</note>
    </ligand>
</feature>
<feature type="binding site" description="in other chain" evidence="1">
    <location>
        <position position="106"/>
    </location>
    <ligand>
        <name>5-phospho-alpha-D-ribose 1-diphosphate</name>
        <dbReference type="ChEBI" id="CHEBI:58017"/>
        <note>ligand shared between dimeric partners</note>
    </ligand>
</feature>
<feature type="binding site" evidence="1">
    <location>
        <position position="109"/>
    </location>
    <ligand>
        <name>5-phospho-alpha-D-ribose 1-diphosphate</name>
        <dbReference type="ChEBI" id="CHEBI:58017"/>
        <note>ligand shared between dimeric partners</note>
    </ligand>
</feature>
<feature type="binding site" evidence="1">
    <location>
        <position position="111"/>
    </location>
    <ligand>
        <name>5-phospho-alpha-D-ribose 1-diphosphate</name>
        <dbReference type="ChEBI" id="CHEBI:58017"/>
        <note>ligand shared between dimeric partners</note>
    </ligand>
</feature>
<feature type="binding site" description="in other chain" evidence="1">
    <location>
        <begin position="130"/>
        <end position="138"/>
    </location>
    <ligand>
        <name>5-phospho-alpha-D-ribose 1-diphosphate</name>
        <dbReference type="ChEBI" id="CHEBI:58017"/>
        <note>ligand shared between dimeric partners</note>
    </ligand>
</feature>
<feature type="binding site" evidence="1">
    <location>
        <position position="134"/>
    </location>
    <ligand>
        <name>orotate</name>
        <dbReference type="ChEBI" id="CHEBI:30839"/>
    </ligand>
</feature>
<feature type="binding site" evidence="1">
    <location>
        <position position="162"/>
    </location>
    <ligand>
        <name>orotate</name>
        <dbReference type="ChEBI" id="CHEBI:30839"/>
    </ligand>
</feature>
<protein>
    <recommendedName>
        <fullName evidence="1">Orotate phosphoribosyltransferase</fullName>
        <shortName evidence="1">OPRT</shortName>
        <shortName evidence="1">OPRTase</shortName>
        <ecNumber evidence="1">2.4.2.10</ecNumber>
    </recommendedName>
</protein>
<evidence type="ECO:0000255" key="1">
    <source>
        <dbReference type="HAMAP-Rule" id="MF_01208"/>
    </source>
</evidence>
<keyword id="KW-0328">Glycosyltransferase</keyword>
<keyword id="KW-0460">Magnesium</keyword>
<keyword id="KW-0665">Pyrimidine biosynthesis</keyword>
<keyword id="KW-0808">Transferase</keyword>
<accession>A9I0G7</accession>
<comment type="function">
    <text evidence="1">Catalyzes the transfer of a ribosyl phosphate group from 5-phosphoribose 1-diphosphate to orotate, leading to the formation of orotidine monophosphate (OMP).</text>
</comment>
<comment type="catalytic activity">
    <reaction evidence="1">
        <text>orotidine 5'-phosphate + diphosphate = orotate + 5-phospho-alpha-D-ribose 1-diphosphate</text>
        <dbReference type="Rhea" id="RHEA:10380"/>
        <dbReference type="ChEBI" id="CHEBI:30839"/>
        <dbReference type="ChEBI" id="CHEBI:33019"/>
        <dbReference type="ChEBI" id="CHEBI:57538"/>
        <dbReference type="ChEBI" id="CHEBI:58017"/>
        <dbReference type="EC" id="2.4.2.10"/>
    </reaction>
</comment>
<comment type="cofactor">
    <cofactor evidence="1">
        <name>Mg(2+)</name>
        <dbReference type="ChEBI" id="CHEBI:18420"/>
    </cofactor>
</comment>
<comment type="pathway">
    <text evidence="1">Pyrimidine metabolism; UMP biosynthesis via de novo pathway; UMP from orotate: step 1/2.</text>
</comment>
<comment type="subunit">
    <text evidence="1">Homodimer.</text>
</comment>
<comment type="similarity">
    <text evidence="1">Belongs to the purine/pyrimidine phosphoribosyltransferase family. PyrE subfamily.</text>
</comment>
<organism>
    <name type="scientific">Bordetella petrii (strain ATCC BAA-461 / DSM 12804 / CCUG 43448)</name>
    <dbReference type="NCBI Taxonomy" id="340100"/>
    <lineage>
        <taxon>Bacteria</taxon>
        <taxon>Pseudomonadati</taxon>
        <taxon>Pseudomonadota</taxon>
        <taxon>Betaproteobacteria</taxon>
        <taxon>Burkholderiales</taxon>
        <taxon>Alcaligenaceae</taxon>
        <taxon>Bordetella</taxon>
    </lineage>
</organism>